<keyword id="KW-0378">Hydrolase</keyword>
<keyword id="KW-0479">Metal-binding</keyword>
<keyword id="KW-1185">Reference proteome</keyword>
<keyword id="KW-0862">Zinc</keyword>
<evidence type="ECO:0000255" key="1">
    <source>
        <dbReference type="HAMAP-Rule" id="MF_01281"/>
    </source>
</evidence>
<sequence>MSELLVTGGQVLRPDLTVERADVLVSQDSGDIVAVDDPGTLDGDDELDASDGLVIPGLVNAHTHVAMTLLRGLADDKPLDAWLQEDVWPVEAELTADDIRAGAELGLVEMIRSGTTALSDMYFEVEEIADAVDQAGMRAVLGFTAVTVGKDDEAARSDLEESLDVARKLDGAADGRVRTTFQPHSLTTVGEEYLREFVPQALEDDLSIHLHANETRDEVTPIVDEHGQRPLAYADNIGLLDGDTYVAHGVHVDDSEIDLLAETGTGVAHCPASNMKLASGMAPVQDLLDAGVTVGIGTDGAASNNDLDMFDEMRDAAMIGKLAADDASAVDAGTVVEMATANGAALLGFDSGRIETGANADLAVIDLDAPHLTPAHDLVSHLAYAVHGSDVRHTVCDGEVLMRDRTVEVFDEQAVRERASEHAASLVERAGD</sequence>
<dbReference type="EC" id="3.5.4.28" evidence="1"/>
<dbReference type="EC" id="3.5.4.31" evidence="1"/>
<dbReference type="EMBL" id="AY596297">
    <property type="protein sequence ID" value="AAV47589.1"/>
    <property type="molecule type" value="Genomic_DNA"/>
</dbReference>
<dbReference type="RefSeq" id="WP_011224461.1">
    <property type="nucleotide sequence ID" value="NC_006396.1"/>
</dbReference>
<dbReference type="SMR" id="Q5UYR3"/>
<dbReference type="STRING" id="272569.rrnAC2837"/>
<dbReference type="PaxDb" id="272569-rrnAC2837"/>
<dbReference type="EnsemblBacteria" id="AAV47589">
    <property type="protein sequence ID" value="AAV47589"/>
    <property type="gene ID" value="rrnAC2837"/>
</dbReference>
<dbReference type="GeneID" id="40153688"/>
<dbReference type="KEGG" id="hma:rrnAC2837"/>
<dbReference type="PATRIC" id="fig|272569.17.peg.3410"/>
<dbReference type="eggNOG" id="arCOG00695">
    <property type="taxonomic scope" value="Archaea"/>
</dbReference>
<dbReference type="HOGENOM" id="CLU_012358_2_1_2"/>
<dbReference type="Proteomes" id="UP000001169">
    <property type="component" value="Chromosome I"/>
</dbReference>
<dbReference type="GO" id="GO:0090614">
    <property type="term" value="F:5'-methylthioadenosine deaminase activity"/>
    <property type="evidence" value="ECO:0007669"/>
    <property type="project" value="UniProtKB-UniRule"/>
</dbReference>
<dbReference type="GO" id="GO:0046872">
    <property type="term" value="F:metal ion binding"/>
    <property type="evidence" value="ECO:0007669"/>
    <property type="project" value="UniProtKB-KW"/>
</dbReference>
<dbReference type="GO" id="GO:0050270">
    <property type="term" value="F:S-adenosylhomocysteine deaminase activity"/>
    <property type="evidence" value="ECO:0007669"/>
    <property type="project" value="UniProtKB-UniRule"/>
</dbReference>
<dbReference type="CDD" id="cd01298">
    <property type="entry name" value="ATZ_TRZ_like"/>
    <property type="match status" value="1"/>
</dbReference>
<dbReference type="FunFam" id="3.20.20.140:FF:000014">
    <property type="entry name" value="5-methylthioadenosine/S-adenosylhomocysteine deaminase"/>
    <property type="match status" value="1"/>
</dbReference>
<dbReference type="Gene3D" id="3.20.20.140">
    <property type="entry name" value="Metal-dependent hydrolases"/>
    <property type="match status" value="1"/>
</dbReference>
<dbReference type="Gene3D" id="2.30.40.10">
    <property type="entry name" value="Urease, subunit C, domain 1"/>
    <property type="match status" value="1"/>
</dbReference>
<dbReference type="HAMAP" id="MF_01281">
    <property type="entry name" value="MTA_SAH_deamin"/>
    <property type="match status" value="1"/>
</dbReference>
<dbReference type="InterPro" id="IPR006680">
    <property type="entry name" value="Amidohydro-rel"/>
</dbReference>
<dbReference type="InterPro" id="IPR023512">
    <property type="entry name" value="Deaminase_MtaD/DadD"/>
</dbReference>
<dbReference type="InterPro" id="IPR011059">
    <property type="entry name" value="Metal-dep_hydrolase_composite"/>
</dbReference>
<dbReference type="InterPro" id="IPR032466">
    <property type="entry name" value="Metal_Hydrolase"/>
</dbReference>
<dbReference type="InterPro" id="IPR050287">
    <property type="entry name" value="MTA/SAH_deaminase"/>
</dbReference>
<dbReference type="PANTHER" id="PTHR43794:SF11">
    <property type="entry name" value="AMIDOHYDROLASE-RELATED DOMAIN-CONTAINING PROTEIN"/>
    <property type="match status" value="1"/>
</dbReference>
<dbReference type="PANTHER" id="PTHR43794">
    <property type="entry name" value="AMINOHYDROLASE SSNA-RELATED"/>
    <property type="match status" value="1"/>
</dbReference>
<dbReference type="Pfam" id="PF01979">
    <property type="entry name" value="Amidohydro_1"/>
    <property type="match status" value="1"/>
</dbReference>
<dbReference type="SUPFAM" id="SSF51338">
    <property type="entry name" value="Composite domain of metallo-dependent hydrolases"/>
    <property type="match status" value="2"/>
</dbReference>
<dbReference type="SUPFAM" id="SSF51556">
    <property type="entry name" value="Metallo-dependent hydrolases"/>
    <property type="match status" value="1"/>
</dbReference>
<accession>Q5UYR3</accession>
<reference key="1">
    <citation type="journal article" date="2004" name="Genome Res.">
        <title>Genome sequence of Haloarcula marismortui: a halophilic archaeon from the Dead Sea.</title>
        <authorList>
            <person name="Baliga N.S."/>
            <person name="Bonneau R."/>
            <person name="Facciotti M.T."/>
            <person name="Pan M."/>
            <person name="Glusman G."/>
            <person name="Deutsch E.W."/>
            <person name="Shannon P."/>
            <person name="Chiu Y."/>
            <person name="Weng R.S."/>
            <person name="Gan R.R."/>
            <person name="Hung P."/>
            <person name="Date S.V."/>
            <person name="Marcotte E."/>
            <person name="Hood L."/>
            <person name="Ng W.V."/>
        </authorList>
    </citation>
    <scope>NUCLEOTIDE SEQUENCE [LARGE SCALE GENOMIC DNA]</scope>
    <source>
        <strain>ATCC 43049 / DSM 3752 / JCM 8966 / VKM B-1809</strain>
    </source>
</reference>
<feature type="chain" id="PRO_0000312466" description="5-methylthioadenosine/S-adenosylhomocysteine deaminase">
    <location>
        <begin position="1"/>
        <end position="432"/>
    </location>
</feature>
<feature type="binding site" evidence="1">
    <location>
        <position position="62"/>
    </location>
    <ligand>
        <name>Zn(2+)</name>
        <dbReference type="ChEBI" id="CHEBI:29105"/>
    </ligand>
</feature>
<feature type="binding site" evidence="1">
    <location>
        <position position="64"/>
    </location>
    <ligand>
        <name>Zn(2+)</name>
        <dbReference type="ChEBI" id="CHEBI:29105"/>
    </ligand>
</feature>
<feature type="binding site" evidence="1">
    <location>
        <position position="91"/>
    </location>
    <ligand>
        <name>substrate</name>
    </ligand>
</feature>
<feature type="binding site" evidence="1">
    <location>
        <position position="184"/>
    </location>
    <ligand>
        <name>substrate</name>
    </ligand>
</feature>
<feature type="binding site" evidence="1">
    <location>
        <position position="211"/>
    </location>
    <ligand>
        <name>Zn(2+)</name>
        <dbReference type="ChEBI" id="CHEBI:29105"/>
    </ligand>
</feature>
<feature type="binding site" evidence="1">
    <location>
        <position position="214"/>
    </location>
    <ligand>
        <name>substrate</name>
    </ligand>
</feature>
<feature type="binding site" evidence="1">
    <location>
        <position position="299"/>
    </location>
    <ligand>
        <name>substrate</name>
    </ligand>
</feature>
<feature type="binding site" evidence="1">
    <location>
        <position position="299"/>
    </location>
    <ligand>
        <name>Zn(2+)</name>
        <dbReference type="ChEBI" id="CHEBI:29105"/>
    </ligand>
</feature>
<proteinExistence type="inferred from homology"/>
<protein>
    <recommendedName>
        <fullName evidence="1">5-methylthioadenosine/S-adenosylhomocysteine deaminase</fullName>
        <shortName evidence="1">MTA/SAH deaminase</shortName>
        <ecNumber evidence="1">3.5.4.28</ecNumber>
        <ecNumber evidence="1">3.5.4.31</ecNumber>
    </recommendedName>
</protein>
<organism>
    <name type="scientific">Haloarcula marismortui (strain ATCC 43049 / DSM 3752 / JCM 8966 / VKM B-1809)</name>
    <name type="common">Halobacterium marismortui</name>
    <dbReference type="NCBI Taxonomy" id="272569"/>
    <lineage>
        <taxon>Archaea</taxon>
        <taxon>Methanobacteriati</taxon>
        <taxon>Methanobacteriota</taxon>
        <taxon>Stenosarchaea group</taxon>
        <taxon>Halobacteria</taxon>
        <taxon>Halobacteriales</taxon>
        <taxon>Haloarculaceae</taxon>
        <taxon>Haloarcula</taxon>
    </lineage>
</organism>
<gene>
    <name evidence="1" type="primary">mtaD</name>
    <name type="ordered locus">rrnAC2837</name>
</gene>
<name>MTAD_HALMA</name>
<comment type="function">
    <text evidence="1">Catalyzes the deamination of 5-methylthioadenosine and S-adenosyl-L-homocysteine into 5-methylthioinosine and S-inosyl-L-homocysteine, respectively. Is also able to deaminate adenosine.</text>
</comment>
<comment type="catalytic activity">
    <reaction evidence="1">
        <text>S-adenosyl-L-homocysteine + H2O + H(+) = S-inosyl-L-homocysteine + NH4(+)</text>
        <dbReference type="Rhea" id="RHEA:20716"/>
        <dbReference type="ChEBI" id="CHEBI:15377"/>
        <dbReference type="ChEBI" id="CHEBI:15378"/>
        <dbReference type="ChEBI" id="CHEBI:28938"/>
        <dbReference type="ChEBI" id="CHEBI:57856"/>
        <dbReference type="ChEBI" id="CHEBI:57985"/>
        <dbReference type="EC" id="3.5.4.28"/>
    </reaction>
</comment>
<comment type="catalytic activity">
    <reaction evidence="1">
        <text>S-methyl-5'-thioadenosine + H2O + H(+) = S-methyl-5'-thioinosine + NH4(+)</text>
        <dbReference type="Rhea" id="RHEA:25025"/>
        <dbReference type="ChEBI" id="CHEBI:15377"/>
        <dbReference type="ChEBI" id="CHEBI:15378"/>
        <dbReference type="ChEBI" id="CHEBI:17509"/>
        <dbReference type="ChEBI" id="CHEBI:28938"/>
        <dbReference type="ChEBI" id="CHEBI:48595"/>
        <dbReference type="EC" id="3.5.4.31"/>
    </reaction>
</comment>
<comment type="cofactor">
    <cofactor evidence="1">
        <name>Zn(2+)</name>
        <dbReference type="ChEBI" id="CHEBI:29105"/>
    </cofactor>
    <text evidence="1">Binds 1 zinc ion per subunit.</text>
</comment>
<comment type="similarity">
    <text evidence="1">Belongs to the metallo-dependent hydrolases superfamily. MTA/SAH deaminase family.</text>
</comment>